<gene>
    <name evidence="1" type="primary">pyrG</name>
    <name type="ordered locus">FTN_0270</name>
</gene>
<name>PYRG_FRATN</name>
<keyword id="KW-0067">ATP-binding</keyword>
<keyword id="KW-0315">Glutamine amidotransferase</keyword>
<keyword id="KW-0436">Ligase</keyword>
<keyword id="KW-0460">Magnesium</keyword>
<keyword id="KW-0479">Metal-binding</keyword>
<keyword id="KW-0547">Nucleotide-binding</keyword>
<keyword id="KW-0665">Pyrimidine biosynthesis</keyword>
<comment type="function">
    <text evidence="1">Catalyzes the ATP-dependent amination of UTP to CTP with either L-glutamine or ammonia as the source of nitrogen. Regulates intracellular CTP levels through interactions with the four ribonucleotide triphosphates.</text>
</comment>
<comment type="catalytic activity">
    <reaction evidence="1">
        <text>UTP + L-glutamine + ATP + H2O = CTP + L-glutamate + ADP + phosphate + 2 H(+)</text>
        <dbReference type="Rhea" id="RHEA:26426"/>
        <dbReference type="ChEBI" id="CHEBI:15377"/>
        <dbReference type="ChEBI" id="CHEBI:15378"/>
        <dbReference type="ChEBI" id="CHEBI:29985"/>
        <dbReference type="ChEBI" id="CHEBI:30616"/>
        <dbReference type="ChEBI" id="CHEBI:37563"/>
        <dbReference type="ChEBI" id="CHEBI:43474"/>
        <dbReference type="ChEBI" id="CHEBI:46398"/>
        <dbReference type="ChEBI" id="CHEBI:58359"/>
        <dbReference type="ChEBI" id="CHEBI:456216"/>
        <dbReference type="EC" id="6.3.4.2"/>
    </reaction>
</comment>
<comment type="catalytic activity">
    <reaction evidence="1">
        <text>L-glutamine + H2O = L-glutamate + NH4(+)</text>
        <dbReference type="Rhea" id="RHEA:15889"/>
        <dbReference type="ChEBI" id="CHEBI:15377"/>
        <dbReference type="ChEBI" id="CHEBI:28938"/>
        <dbReference type="ChEBI" id="CHEBI:29985"/>
        <dbReference type="ChEBI" id="CHEBI:58359"/>
    </reaction>
</comment>
<comment type="catalytic activity">
    <reaction evidence="1">
        <text>UTP + NH4(+) + ATP = CTP + ADP + phosphate + 2 H(+)</text>
        <dbReference type="Rhea" id="RHEA:16597"/>
        <dbReference type="ChEBI" id="CHEBI:15378"/>
        <dbReference type="ChEBI" id="CHEBI:28938"/>
        <dbReference type="ChEBI" id="CHEBI:30616"/>
        <dbReference type="ChEBI" id="CHEBI:37563"/>
        <dbReference type="ChEBI" id="CHEBI:43474"/>
        <dbReference type="ChEBI" id="CHEBI:46398"/>
        <dbReference type="ChEBI" id="CHEBI:456216"/>
    </reaction>
</comment>
<comment type="activity regulation">
    <text evidence="1">Allosterically activated by GTP, when glutamine is the substrate; GTP has no effect on the reaction when ammonia is the substrate. The allosteric effector GTP functions by stabilizing the protein conformation that binds the tetrahedral intermediate(s) formed during glutamine hydrolysis. Inhibited by the product CTP, via allosteric rather than competitive inhibition.</text>
</comment>
<comment type="pathway">
    <text evidence="1">Pyrimidine metabolism; CTP biosynthesis via de novo pathway; CTP from UDP: step 2/2.</text>
</comment>
<comment type="subunit">
    <text evidence="1">Homotetramer.</text>
</comment>
<comment type="miscellaneous">
    <text evidence="1">CTPSs have evolved a hybrid strategy for distinguishing between UTP and CTP. The overlapping regions of the product feedback inhibitory and substrate sites recognize a common feature in both compounds, the triphosphate moiety. To differentiate isosteric substrate and product pyrimidine rings, an additional pocket far from the expected kinase/ligase catalytic site, specifically recognizes the cytosine and ribose portions of the product inhibitor.</text>
</comment>
<comment type="similarity">
    <text evidence="1">Belongs to the CTP synthase family.</text>
</comment>
<organism>
    <name type="scientific">Francisella tularensis subsp. novicida (strain U112)</name>
    <dbReference type="NCBI Taxonomy" id="401614"/>
    <lineage>
        <taxon>Bacteria</taxon>
        <taxon>Pseudomonadati</taxon>
        <taxon>Pseudomonadota</taxon>
        <taxon>Gammaproteobacteria</taxon>
        <taxon>Thiotrichales</taxon>
        <taxon>Francisellaceae</taxon>
        <taxon>Francisella</taxon>
    </lineage>
</organism>
<evidence type="ECO:0000255" key="1">
    <source>
        <dbReference type="HAMAP-Rule" id="MF_01227"/>
    </source>
</evidence>
<protein>
    <recommendedName>
        <fullName evidence="1">CTP synthase</fullName>
        <ecNumber evidence="1">6.3.4.2</ecNumber>
    </recommendedName>
    <alternativeName>
        <fullName evidence="1">Cytidine 5'-triphosphate synthase</fullName>
    </alternativeName>
    <alternativeName>
        <fullName evidence="1">Cytidine triphosphate synthetase</fullName>
        <shortName evidence="1">CTP synthetase</shortName>
        <shortName evidence="1">CTPS</shortName>
    </alternativeName>
    <alternativeName>
        <fullName evidence="1">UTP--ammonia ligase</fullName>
    </alternativeName>
</protein>
<accession>A0Q4L3</accession>
<proteinExistence type="inferred from homology"/>
<dbReference type="EC" id="6.3.4.2" evidence="1"/>
<dbReference type="EMBL" id="CP000439">
    <property type="protein sequence ID" value="ABK89178.1"/>
    <property type="molecule type" value="Genomic_DNA"/>
</dbReference>
<dbReference type="RefSeq" id="WP_003020026.1">
    <property type="nucleotide sequence ID" value="NZ_CP009633.1"/>
</dbReference>
<dbReference type="SMR" id="A0Q4L3"/>
<dbReference type="KEGG" id="ftn:FTN_0270"/>
<dbReference type="KEGG" id="ftx:AW25_1773"/>
<dbReference type="BioCyc" id="FTUL401614:G1G75-281-MONOMER"/>
<dbReference type="UniPathway" id="UPA00159">
    <property type="reaction ID" value="UER00277"/>
</dbReference>
<dbReference type="Proteomes" id="UP000000762">
    <property type="component" value="Chromosome"/>
</dbReference>
<dbReference type="GO" id="GO:0005829">
    <property type="term" value="C:cytosol"/>
    <property type="evidence" value="ECO:0007669"/>
    <property type="project" value="TreeGrafter"/>
</dbReference>
<dbReference type="GO" id="GO:0005524">
    <property type="term" value="F:ATP binding"/>
    <property type="evidence" value="ECO:0007669"/>
    <property type="project" value="UniProtKB-KW"/>
</dbReference>
<dbReference type="GO" id="GO:0003883">
    <property type="term" value="F:CTP synthase activity"/>
    <property type="evidence" value="ECO:0007669"/>
    <property type="project" value="UniProtKB-UniRule"/>
</dbReference>
<dbReference type="GO" id="GO:0004359">
    <property type="term" value="F:glutaminase activity"/>
    <property type="evidence" value="ECO:0007669"/>
    <property type="project" value="RHEA"/>
</dbReference>
<dbReference type="GO" id="GO:0042802">
    <property type="term" value="F:identical protein binding"/>
    <property type="evidence" value="ECO:0007669"/>
    <property type="project" value="TreeGrafter"/>
</dbReference>
<dbReference type="GO" id="GO:0046872">
    <property type="term" value="F:metal ion binding"/>
    <property type="evidence" value="ECO:0007669"/>
    <property type="project" value="UniProtKB-KW"/>
</dbReference>
<dbReference type="GO" id="GO:0044210">
    <property type="term" value="P:'de novo' CTP biosynthetic process"/>
    <property type="evidence" value="ECO:0007669"/>
    <property type="project" value="UniProtKB-UniRule"/>
</dbReference>
<dbReference type="GO" id="GO:0019856">
    <property type="term" value="P:pyrimidine nucleobase biosynthetic process"/>
    <property type="evidence" value="ECO:0007669"/>
    <property type="project" value="TreeGrafter"/>
</dbReference>
<dbReference type="CDD" id="cd03113">
    <property type="entry name" value="CTPS_N"/>
    <property type="match status" value="1"/>
</dbReference>
<dbReference type="CDD" id="cd01746">
    <property type="entry name" value="GATase1_CTP_Synthase"/>
    <property type="match status" value="1"/>
</dbReference>
<dbReference type="FunFam" id="3.40.50.300:FF:000009">
    <property type="entry name" value="CTP synthase"/>
    <property type="match status" value="1"/>
</dbReference>
<dbReference type="FunFam" id="3.40.50.880:FF:000002">
    <property type="entry name" value="CTP synthase"/>
    <property type="match status" value="1"/>
</dbReference>
<dbReference type="Gene3D" id="3.40.50.880">
    <property type="match status" value="1"/>
</dbReference>
<dbReference type="Gene3D" id="3.40.50.300">
    <property type="entry name" value="P-loop containing nucleotide triphosphate hydrolases"/>
    <property type="match status" value="1"/>
</dbReference>
<dbReference type="HAMAP" id="MF_01227">
    <property type="entry name" value="PyrG"/>
    <property type="match status" value="1"/>
</dbReference>
<dbReference type="InterPro" id="IPR029062">
    <property type="entry name" value="Class_I_gatase-like"/>
</dbReference>
<dbReference type="InterPro" id="IPR004468">
    <property type="entry name" value="CTP_synthase"/>
</dbReference>
<dbReference type="InterPro" id="IPR017456">
    <property type="entry name" value="CTP_synthase_N"/>
</dbReference>
<dbReference type="InterPro" id="IPR017926">
    <property type="entry name" value="GATASE"/>
</dbReference>
<dbReference type="InterPro" id="IPR033828">
    <property type="entry name" value="GATase1_CTP_Synthase"/>
</dbReference>
<dbReference type="InterPro" id="IPR027417">
    <property type="entry name" value="P-loop_NTPase"/>
</dbReference>
<dbReference type="NCBIfam" id="NF003792">
    <property type="entry name" value="PRK05380.1"/>
    <property type="match status" value="1"/>
</dbReference>
<dbReference type="NCBIfam" id="TIGR00337">
    <property type="entry name" value="PyrG"/>
    <property type="match status" value="1"/>
</dbReference>
<dbReference type="PANTHER" id="PTHR11550">
    <property type="entry name" value="CTP SYNTHASE"/>
    <property type="match status" value="1"/>
</dbReference>
<dbReference type="PANTHER" id="PTHR11550:SF0">
    <property type="entry name" value="CTP SYNTHASE-RELATED"/>
    <property type="match status" value="1"/>
</dbReference>
<dbReference type="Pfam" id="PF06418">
    <property type="entry name" value="CTP_synth_N"/>
    <property type="match status" value="1"/>
</dbReference>
<dbReference type="Pfam" id="PF00117">
    <property type="entry name" value="GATase"/>
    <property type="match status" value="1"/>
</dbReference>
<dbReference type="SUPFAM" id="SSF52317">
    <property type="entry name" value="Class I glutamine amidotransferase-like"/>
    <property type="match status" value="1"/>
</dbReference>
<dbReference type="SUPFAM" id="SSF52540">
    <property type="entry name" value="P-loop containing nucleoside triphosphate hydrolases"/>
    <property type="match status" value="1"/>
</dbReference>
<dbReference type="PROSITE" id="PS51273">
    <property type="entry name" value="GATASE_TYPE_1"/>
    <property type="match status" value="1"/>
</dbReference>
<feature type="chain" id="PRO_1000139461" description="CTP synthase">
    <location>
        <begin position="1"/>
        <end position="546"/>
    </location>
</feature>
<feature type="domain" description="Glutamine amidotransferase type-1" evidence="1">
    <location>
        <begin position="294"/>
        <end position="546"/>
    </location>
</feature>
<feature type="region of interest" description="Amidoligase domain" evidence="1">
    <location>
        <begin position="1"/>
        <end position="269"/>
    </location>
</feature>
<feature type="active site" description="Nucleophile; for glutamine hydrolysis" evidence="1">
    <location>
        <position position="383"/>
    </location>
</feature>
<feature type="active site" evidence="1">
    <location>
        <position position="519"/>
    </location>
</feature>
<feature type="active site" evidence="1">
    <location>
        <position position="521"/>
    </location>
</feature>
<feature type="binding site" evidence="1">
    <location>
        <position position="16"/>
    </location>
    <ligand>
        <name>CTP</name>
        <dbReference type="ChEBI" id="CHEBI:37563"/>
        <note>allosteric inhibitor</note>
    </ligand>
</feature>
<feature type="binding site" evidence="1">
    <location>
        <position position="16"/>
    </location>
    <ligand>
        <name>UTP</name>
        <dbReference type="ChEBI" id="CHEBI:46398"/>
    </ligand>
</feature>
<feature type="binding site" evidence="1">
    <location>
        <begin position="17"/>
        <end position="22"/>
    </location>
    <ligand>
        <name>ATP</name>
        <dbReference type="ChEBI" id="CHEBI:30616"/>
    </ligand>
</feature>
<feature type="binding site" evidence="1">
    <location>
        <position position="74"/>
    </location>
    <ligand>
        <name>ATP</name>
        <dbReference type="ChEBI" id="CHEBI:30616"/>
    </ligand>
</feature>
<feature type="binding site" evidence="1">
    <location>
        <position position="74"/>
    </location>
    <ligand>
        <name>Mg(2+)</name>
        <dbReference type="ChEBI" id="CHEBI:18420"/>
    </ligand>
</feature>
<feature type="binding site" evidence="1">
    <location>
        <position position="143"/>
    </location>
    <ligand>
        <name>Mg(2+)</name>
        <dbReference type="ChEBI" id="CHEBI:18420"/>
    </ligand>
</feature>
<feature type="binding site" evidence="1">
    <location>
        <begin position="150"/>
        <end position="152"/>
    </location>
    <ligand>
        <name>CTP</name>
        <dbReference type="ChEBI" id="CHEBI:37563"/>
        <note>allosteric inhibitor</note>
    </ligand>
</feature>
<feature type="binding site" evidence="1">
    <location>
        <begin position="190"/>
        <end position="195"/>
    </location>
    <ligand>
        <name>CTP</name>
        <dbReference type="ChEBI" id="CHEBI:37563"/>
        <note>allosteric inhibitor</note>
    </ligand>
</feature>
<feature type="binding site" evidence="1">
    <location>
        <begin position="190"/>
        <end position="195"/>
    </location>
    <ligand>
        <name>UTP</name>
        <dbReference type="ChEBI" id="CHEBI:46398"/>
    </ligand>
</feature>
<feature type="binding site" evidence="1">
    <location>
        <position position="226"/>
    </location>
    <ligand>
        <name>CTP</name>
        <dbReference type="ChEBI" id="CHEBI:37563"/>
        <note>allosteric inhibitor</note>
    </ligand>
</feature>
<feature type="binding site" evidence="1">
    <location>
        <position position="226"/>
    </location>
    <ligand>
        <name>UTP</name>
        <dbReference type="ChEBI" id="CHEBI:46398"/>
    </ligand>
</feature>
<feature type="binding site" evidence="1">
    <location>
        <position position="356"/>
    </location>
    <ligand>
        <name>L-glutamine</name>
        <dbReference type="ChEBI" id="CHEBI:58359"/>
    </ligand>
</feature>
<feature type="binding site" evidence="1">
    <location>
        <begin position="384"/>
        <end position="387"/>
    </location>
    <ligand>
        <name>L-glutamine</name>
        <dbReference type="ChEBI" id="CHEBI:58359"/>
    </ligand>
</feature>
<feature type="binding site" evidence="1">
    <location>
        <position position="407"/>
    </location>
    <ligand>
        <name>L-glutamine</name>
        <dbReference type="ChEBI" id="CHEBI:58359"/>
    </ligand>
</feature>
<feature type="binding site" evidence="1">
    <location>
        <position position="474"/>
    </location>
    <ligand>
        <name>L-glutamine</name>
        <dbReference type="ChEBI" id="CHEBI:58359"/>
    </ligand>
</feature>
<sequence>MNSNTKIIFVTGGVVSSLGKGVTAASLATLLESRGLNVTMMKLDPYINVDPGTMSPLQHGEVFVTEDGAETDLDLGHYERFIRNKMTQANNFTTGKVYQSVLRRERKGDYLGATIQVIPHITDEIKRRICSGIADDVDVAIVEIGGTVGDIESQPFLEAIRQLRIELGRNRTLFVHLTLLPYIKVAGEIKTKPTQHSVKELRGIGIQADVLVCRCEKKFDDSEKRKIALFTNVDQDCIFTAEDVDTIYEVPLKYNQQGFDAKLVELLNLNAKEADLSEWQNVVNTIRDVKGEVTIAMVGKYVSLTEAYKSLNEALYNAGYKKGVKVKIKFVDSEDVNENNVESYFKDVAAILVPGGFGSRGVEGKIISIKYARENQIPFLGICLGMQLAVIEYARNILGIKDAHSSELEPTTANPVIGLITEWQAEDGTVHQRTHSSDLGGTMRLGGYKCVLKQGSRAREIYQADEVVERHRHRYEVNSNYVERLEEAGLIFSGRSEDNKLMELIEIPQHKWFIACQAHPEFTSTPRYGHKLFESYIQAAIENSNN</sequence>
<reference key="1">
    <citation type="journal article" date="2007" name="Genome Biol.">
        <title>Comparison of Francisella tularensis genomes reveals evolutionary events associated with the emergence of human pathogenic strains.</title>
        <authorList>
            <person name="Rohmer L."/>
            <person name="Fong C."/>
            <person name="Abmayr S."/>
            <person name="Wasnick M."/>
            <person name="Larson Freeman T.J."/>
            <person name="Radey M."/>
            <person name="Guina T."/>
            <person name="Svensson K."/>
            <person name="Hayden H.S."/>
            <person name="Jacobs M."/>
            <person name="Gallagher L.A."/>
            <person name="Manoil C."/>
            <person name="Ernst R.K."/>
            <person name="Drees B."/>
            <person name="Buckley D."/>
            <person name="Haugen E."/>
            <person name="Bovee D."/>
            <person name="Zhou Y."/>
            <person name="Chang J."/>
            <person name="Levy R."/>
            <person name="Lim R."/>
            <person name="Gillett W."/>
            <person name="Guenthener D."/>
            <person name="Kang A."/>
            <person name="Shaffer S.A."/>
            <person name="Taylor G."/>
            <person name="Chen J."/>
            <person name="Gallis B."/>
            <person name="D'Argenio D.A."/>
            <person name="Forsman M."/>
            <person name="Olson M.V."/>
            <person name="Goodlett D.R."/>
            <person name="Kaul R."/>
            <person name="Miller S.I."/>
            <person name="Brittnacher M.J."/>
        </authorList>
    </citation>
    <scope>NUCLEOTIDE SEQUENCE [LARGE SCALE GENOMIC DNA]</scope>
    <source>
        <strain>U112</strain>
    </source>
</reference>